<name>RSMA_RUBXD</name>
<comment type="function">
    <text evidence="1">Specifically dimethylates two adjacent adenosines (A1518 and A1519) in the loop of a conserved hairpin near the 3'-end of 16S rRNA in the 30S particle. May play a critical role in biogenesis of 30S subunits.</text>
</comment>
<comment type="catalytic activity">
    <reaction evidence="1">
        <text>adenosine(1518)/adenosine(1519) in 16S rRNA + 4 S-adenosyl-L-methionine = N(6)-dimethyladenosine(1518)/N(6)-dimethyladenosine(1519) in 16S rRNA + 4 S-adenosyl-L-homocysteine + 4 H(+)</text>
        <dbReference type="Rhea" id="RHEA:19609"/>
        <dbReference type="Rhea" id="RHEA-COMP:10232"/>
        <dbReference type="Rhea" id="RHEA-COMP:10233"/>
        <dbReference type="ChEBI" id="CHEBI:15378"/>
        <dbReference type="ChEBI" id="CHEBI:57856"/>
        <dbReference type="ChEBI" id="CHEBI:59789"/>
        <dbReference type="ChEBI" id="CHEBI:74411"/>
        <dbReference type="ChEBI" id="CHEBI:74493"/>
        <dbReference type="EC" id="2.1.1.182"/>
    </reaction>
</comment>
<comment type="subcellular location">
    <subcellularLocation>
        <location evidence="1">Cytoplasm</location>
    </subcellularLocation>
</comment>
<comment type="similarity">
    <text evidence="1">Belongs to the class I-like SAM-binding methyltransferase superfamily. rRNA adenine N(6)-methyltransferase family. RsmA subfamily.</text>
</comment>
<keyword id="KW-0963">Cytoplasm</keyword>
<keyword id="KW-0489">Methyltransferase</keyword>
<keyword id="KW-1185">Reference proteome</keyword>
<keyword id="KW-0694">RNA-binding</keyword>
<keyword id="KW-0698">rRNA processing</keyword>
<keyword id="KW-0949">S-adenosyl-L-methionine</keyword>
<keyword id="KW-0808">Transferase</keyword>
<feature type="chain" id="PRO_0000257341" description="Ribosomal RNA small subunit methyltransferase A">
    <location>
        <begin position="1"/>
        <end position="262"/>
    </location>
</feature>
<feature type="region of interest" description="Disordered" evidence="2">
    <location>
        <begin position="218"/>
        <end position="246"/>
    </location>
</feature>
<feature type="binding site" evidence="1">
    <location>
        <position position="19"/>
    </location>
    <ligand>
        <name>S-adenosyl-L-methionine</name>
        <dbReference type="ChEBI" id="CHEBI:59789"/>
    </ligand>
</feature>
<feature type="binding site" evidence="1">
    <location>
        <position position="21"/>
    </location>
    <ligand>
        <name>S-adenosyl-L-methionine</name>
        <dbReference type="ChEBI" id="CHEBI:59789"/>
    </ligand>
</feature>
<feature type="binding site" evidence="1">
    <location>
        <position position="44"/>
    </location>
    <ligand>
        <name>S-adenosyl-L-methionine</name>
        <dbReference type="ChEBI" id="CHEBI:59789"/>
    </ligand>
</feature>
<feature type="binding site" evidence="1">
    <location>
        <position position="65"/>
    </location>
    <ligand>
        <name>S-adenosyl-L-methionine</name>
        <dbReference type="ChEBI" id="CHEBI:59789"/>
    </ligand>
</feature>
<feature type="binding site" evidence="1">
    <location>
        <position position="90"/>
    </location>
    <ligand>
        <name>S-adenosyl-L-methionine</name>
        <dbReference type="ChEBI" id="CHEBI:59789"/>
    </ligand>
</feature>
<feature type="binding site" evidence="1">
    <location>
        <position position="109"/>
    </location>
    <ligand>
        <name>S-adenosyl-L-methionine</name>
        <dbReference type="ChEBI" id="CHEBI:59789"/>
    </ligand>
</feature>
<gene>
    <name evidence="1" type="primary">rsmA</name>
    <name evidence="1" type="synonym">ksgA</name>
    <name type="ordered locus">Rxyl_0892</name>
</gene>
<dbReference type="EC" id="2.1.1.182" evidence="1"/>
<dbReference type="EMBL" id="CP000386">
    <property type="protein sequence ID" value="ABG03859.1"/>
    <property type="molecule type" value="Genomic_DNA"/>
</dbReference>
<dbReference type="RefSeq" id="WP_011563877.1">
    <property type="nucleotide sequence ID" value="NC_008148.1"/>
</dbReference>
<dbReference type="SMR" id="Q1AXL9"/>
<dbReference type="STRING" id="266117.Rxyl_0892"/>
<dbReference type="KEGG" id="rxy:Rxyl_0892"/>
<dbReference type="eggNOG" id="COG0030">
    <property type="taxonomic scope" value="Bacteria"/>
</dbReference>
<dbReference type="HOGENOM" id="CLU_041220_0_1_11"/>
<dbReference type="OrthoDB" id="9814755at2"/>
<dbReference type="PhylomeDB" id="Q1AXL9"/>
<dbReference type="Proteomes" id="UP000006637">
    <property type="component" value="Chromosome"/>
</dbReference>
<dbReference type="GO" id="GO:0005829">
    <property type="term" value="C:cytosol"/>
    <property type="evidence" value="ECO:0007669"/>
    <property type="project" value="TreeGrafter"/>
</dbReference>
<dbReference type="GO" id="GO:0052908">
    <property type="term" value="F:16S rRNA (adenine(1518)-N(6)/adenine(1519)-N(6))-dimethyltransferase activity"/>
    <property type="evidence" value="ECO:0007669"/>
    <property type="project" value="UniProtKB-EC"/>
</dbReference>
<dbReference type="GO" id="GO:0003723">
    <property type="term" value="F:RNA binding"/>
    <property type="evidence" value="ECO:0007669"/>
    <property type="project" value="UniProtKB-KW"/>
</dbReference>
<dbReference type="CDD" id="cd02440">
    <property type="entry name" value="AdoMet_MTases"/>
    <property type="match status" value="1"/>
</dbReference>
<dbReference type="Gene3D" id="1.10.8.100">
    <property type="entry name" value="Ribosomal RNA adenine dimethylase-like, domain 2"/>
    <property type="match status" value="1"/>
</dbReference>
<dbReference type="Gene3D" id="3.40.50.150">
    <property type="entry name" value="Vaccinia Virus protein VP39"/>
    <property type="match status" value="1"/>
</dbReference>
<dbReference type="HAMAP" id="MF_00607">
    <property type="entry name" value="16SrRNA_methyltr_A"/>
    <property type="match status" value="1"/>
</dbReference>
<dbReference type="InterPro" id="IPR001737">
    <property type="entry name" value="KsgA/Erm"/>
</dbReference>
<dbReference type="InterPro" id="IPR023165">
    <property type="entry name" value="rRNA_Ade_diMease-like_C"/>
</dbReference>
<dbReference type="InterPro" id="IPR020596">
    <property type="entry name" value="rRNA_Ade_Mease_Trfase_CS"/>
</dbReference>
<dbReference type="InterPro" id="IPR020598">
    <property type="entry name" value="rRNA_Ade_methylase_Trfase_N"/>
</dbReference>
<dbReference type="InterPro" id="IPR011530">
    <property type="entry name" value="rRNA_adenine_dimethylase"/>
</dbReference>
<dbReference type="InterPro" id="IPR029063">
    <property type="entry name" value="SAM-dependent_MTases_sf"/>
</dbReference>
<dbReference type="NCBIfam" id="TIGR00755">
    <property type="entry name" value="ksgA"/>
    <property type="match status" value="1"/>
</dbReference>
<dbReference type="PANTHER" id="PTHR11727">
    <property type="entry name" value="DIMETHYLADENOSINE TRANSFERASE"/>
    <property type="match status" value="1"/>
</dbReference>
<dbReference type="PANTHER" id="PTHR11727:SF7">
    <property type="entry name" value="DIMETHYLADENOSINE TRANSFERASE-RELATED"/>
    <property type="match status" value="1"/>
</dbReference>
<dbReference type="Pfam" id="PF00398">
    <property type="entry name" value="RrnaAD"/>
    <property type="match status" value="1"/>
</dbReference>
<dbReference type="SMART" id="SM00650">
    <property type="entry name" value="rADc"/>
    <property type="match status" value="1"/>
</dbReference>
<dbReference type="SUPFAM" id="SSF53335">
    <property type="entry name" value="S-adenosyl-L-methionine-dependent methyltransferases"/>
    <property type="match status" value="1"/>
</dbReference>
<dbReference type="PROSITE" id="PS01131">
    <property type="entry name" value="RRNA_A_DIMETH"/>
    <property type="match status" value="1"/>
</dbReference>
<dbReference type="PROSITE" id="PS51689">
    <property type="entry name" value="SAM_RNA_A_N6_MT"/>
    <property type="match status" value="1"/>
</dbReference>
<reference key="1">
    <citation type="submission" date="2006-06" db="EMBL/GenBank/DDBJ databases">
        <title>Complete sequence of Rubrobacter xylanophilus DSM 9941.</title>
        <authorList>
            <consortium name="US DOE Joint Genome Institute"/>
            <person name="Copeland A."/>
            <person name="Lucas S."/>
            <person name="Lapidus A."/>
            <person name="Barry K."/>
            <person name="Detter J.C."/>
            <person name="Glavina del Rio T."/>
            <person name="Hammon N."/>
            <person name="Israni S."/>
            <person name="Dalin E."/>
            <person name="Tice H."/>
            <person name="Pitluck S."/>
            <person name="Munk A.C."/>
            <person name="Brettin T."/>
            <person name="Bruce D."/>
            <person name="Han C."/>
            <person name="Tapia R."/>
            <person name="Gilna P."/>
            <person name="Schmutz J."/>
            <person name="Larimer F."/>
            <person name="Land M."/>
            <person name="Hauser L."/>
            <person name="Kyrpides N."/>
            <person name="Lykidis A."/>
            <person name="da Costa M.S."/>
            <person name="Rainey F.A."/>
            <person name="Empadinhas N."/>
            <person name="Jolivet E."/>
            <person name="Battista J.R."/>
            <person name="Richardson P."/>
        </authorList>
    </citation>
    <scope>NUCLEOTIDE SEQUENCE [LARGE SCALE GENOMIC DNA]</scope>
    <source>
        <strain>DSM 9941 / JCM 11954 / NBRC 16129 / PRD-1</strain>
    </source>
</reference>
<sequence>MSPSLSGRTPRPKKRLGQHFLKDANTARIVAAGLTERDVVLEIGPGRGFLTAFLAERAGLVHAVEIDPDVLPELRRAVGARGNVRIHEADALRFDYGALSPPPNRLAANLPYNIASPLVLRLLEEVPSLERMRFMVQLEVALRMTARPGSKDYGAYAVLIQLLSRPEVAHRVSPRVFDPPPRVRSAVVELERRRDAPEDYRGVKELVAAAFRSRRKRLPNNLPGPLRERAEEALAGLGHGPDARAEELSPEDFVALYRRISP</sequence>
<accession>Q1AXL9</accession>
<protein>
    <recommendedName>
        <fullName evidence="1">Ribosomal RNA small subunit methyltransferase A</fullName>
        <ecNumber evidence="1">2.1.1.182</ecNumber>
    </recommendedName>
    <alternativeName>
        <fullName evidence="1">16S rRNA (adenine(1518)-N(6)/adenine(1519)-N(6))-dimethyltransferase</fullName>
    </alternativeName>
    <alternativeName>
        <fullName evidence="1">16S rRNA dimethyladenosine transferase</fullName>
    </alternativeName>
    <alternativeName>
        <fullName evidence="1">16S rRNA dimethylase</fullName>
    </alternativeName>
    <alternativeName>
        <fullName evidence="1">S-adenosylmethionine-6-N', N'-adenosyl(rRNA) dimethyltransferase</fullName>
    </alternativeName>
</protein>
<organism>
    <name type="scientific">Rubrobacter xylanophilus (strain DSM 9941 / JCM 11954 / NBRC 16129 / PRD-1)</name>
    <dbReference type="NCBI Taxonomy" id="266117"/>
    <lineage>
        <taxon>Bacteria</taxon>
        <taxon>Bacillati</taxon>
        <taxon>Actinomycetota</taxon>
        <taxon>Rubrobacteria</taxon>
        <taxon>Rubrobacterales</taxon>
        <taxon>Rubrobacteraceae</taxon>
        <taxon>Rubrobacter</taxon>
    </lineage>
</organism>
<proteinExistence type="inferred from homology"/>
<evidence type="ECO:0000255" key="1">
    <source>
        <dbReference type="HAMAP-Rule" id="MF_00607"/>
    </source>
</evidence>
<evidence type="ECO:0000256" key="2">
    <source>
        <dbReference type="SAM" id="MobiDB-lite"/>
    </source>
</evidence>